<gene>
    <name type="primary">IKI3</name>
    <name type="synonym">ELP1</name>
    <name type="synonym">TOT1</name>
    <name type="ordered locus">YLR384C</name>
    <name type="ORF">L3502.7</name>
</gene>
<protein>
    <recommendedName>
        <fullName>Elongator complex protein 1</fullName>
    </recommendedName>
    <alternativeName>
        <fullName>Gamma-toxin target 1</fullName>
    </alternativeName>
    <alternativeName>
        <fullName>Protein IKI3</fullName>
    </alternativeName>
</protein>
<evidence type="ECO:0000256" key="1">
    <source>
        <dbReference type="SAM" id="MobiDB-lite"/>
    </source>
</evidence>
<evidence type="ECO:0000269" key="2">
    <source>
    </source>
</evidence>
<evidence type="ECO:0000269" key="3">
    <source>
    </source>
</evidence>
<evidence type="ECO:0000269" key="4">
    <source>
    </source>
</evidence>
<evidence type="ECO:0000269" key="5">
    <source>
    </source>
</evidence>
<evidence type="ECO:0000269" key="6">
    <source>
    </source>
</evidence>
<evidence type="ECO:0000269" key="7">
    <source>
    </source>
</evidence>
<evidence type="ECO:0000269" key="8">
    <source>
    </source>
</evidence>
<evidence type="ECO:0000269" key="9">
    <source>
    </source>
</evidence>
<evidence type="ECO:0000269" key="10">
    <source>
    </source>
</evidence>
<evidence type="ECO:0000269" key="11">
    <source>
    </source>
</evidence>
<evidence type="ECO:0000269" key="12">
    <source>
    </source>
</evidence>
<evidence type="ECO:0000269" key="13">
    <source>
    </source>
</evidence>
<evidence type="ECO:0000269" key="14">
    <source>
    </source>
</evidence>
<evidence type="ECO:0000269" key="15">
    <source>
    </source>
</evidence>
<evidence type="ECO:0000269" key="16">
    <source>
    </source>
</evidence>
<evidence type="ECO:0000269" key="17">
    <source>
    </source>
</evidence>
<evidence type="ECO:0000269" key="18">
    <source>
    </source>
</evidence>
<evidence type="ECO:0000269" key="19">
    <source>
    </source>
</evidence>
<evidence type="ECO:0000303" key="20">
    <source>
    </source>
</evidence>
<evidence type="ECO:0000305" key="21"/>
<evidence type="ECO:0000305" key="22">
    <source>
    </source>
</evidence>
<evidence type="ECO:0000305" key="23">
    <source>
    </source>
</evidence>
<evidence type="ECO:0000305" key="24">
    <source>
    </source>
</evidence>
<evidence type="ECO:0000305" key="25">
    <source>
    </source>
</evidence>
<evidence type="ECO:0007744" key="26">
    <source>
        <dbReference type="PDB" id="5CQS"/>
    </source>
</evidence>
<evidence type="ECO:0007744" key="27">
    <source>
        <dbReference type="PDB" id="6QK7"/>
    </source>
</evidence>
<evidence type="ECO:0007829" key="28">
    <source>
        <dbReference type="PDB" id="5CQS"/>
    </source>
</evidence>
<evidence type="ECO:0007829" key="29">
    <source>
        <dbReference type="PDB" id="6QK7"/>
    </source>
</evidence>
<sequence length="1349" mass="152990">MVEHDKSGSKRQELRSNMRNLITLNKGKFKPTASTAEGDEDDLSFTLLDSVFDTLSDSITCVLGSTDIGAIEVQQFMKDGSRNVLASFNIQTFDDKLLSFVHFADINQLVFVFEQGDIITATYDPVSLDPAETLIEIMGTIDNGIAAAQWSYDEETLAMVTKDRNVVVLSKLFEPISEYHLEVDDLKISKHVTVGWGKKETQFRGKGARAMEREALASLKASGLVGNQLRDPTMPYMVDTGDVTALDSHEITISWRGDCDYFAVSSVEEVPDEDDETKSIKRRAFRVFSREGQLDSASEPVTGMEHQLSWKPQGSLIASIQRKTDLGEEDSVDVIFFERNGLRHGEFDTRLPLDEKVESVCWNSNSEALAVVLANRIQLWTSKNYHWYLKQELYASDISYVKWHPEKDFTLMFSDAGFINIVDFAYKMAQGPTLEPFDNGTSLVVDGRTVNITPLALANVPPPMYYRDFETPGNVLDVACSFSNEIYAAINKDVLIFAAVPSIEEMKKGKHPSIVCEFPKSEFTSEVDSLRQVAFINDSIVGVLLDTDNLSRIALLDIQDITQPTLITIVEVYDKIVLLRSDFDYNHLVYETRDGTVCQLDAEGQLMEITKFPQLVRDFRVKRVHNTSAEDDDNWSAESSELVAFGITNNGKLFANQVLLASAVTSLEITDSFLLFTTAQHNLQFVHLNSTDFKPLPLVEEGVEDERVRAIERGSILVSVIPSKSSVVLQATRGNLETIYPRIMVLAEVRKNIMAKRYKEAFIVCRTHRINLDILHDYAPELFIENLEVFINQIGRVDYLNLFISCLSEDDVTKTKYKETLYSGISKSFGMEPAPLTEMQIYMKKKMFDPKTSKVNKICDAVLNVLLSNPEYKKKYLQTIITAYASQNPQNLSAALKLISELENSEEKDSCVTYLCFLQDVNVVYKSALSLYDVSLALLVAQKSQMDPREYLPFLQELQDNEPLRRKFLIDDYLGNYEKALEHLSEIDKDGNVSEEVIDYVESHDLYKHGLALYRYDSEKQNVIYNIYAKHLSSNQMYTDAAVAYEMLGKLKEAMGAYQSAKRWREAMSIAVQKFPEEVESVAEELISSLTFEHRYVDAADIQLEYLDNVKEAVALYCKAYRYDIASLVAIKAKKDELLEEVVDPGLGEGFGIIAELLADCKGQINSQLRRLRELRAKKEENPYAFYGQETEQADDVSVAPSETSTQESFFTRYTGKTGGTAKTGASRRTAKNKRREERKRARGKKGTIYEEEYLVQSVGRLIERLNQTKPDAVRVVEGLCRRNMREQAHQIQKNFVEVLDLLKANVKEIYSISEKDRERVNENGEVYYIPEIPVPEIHDFPKSHIVDF</sequence>
<name>ELP1_YEAST</name>
<organism>
    <name type="scientific">Saccharomyces cerevisiae (strain ATCC 204508 / S288c)</name>
    <name type="common">Baker's yeast</name>
    <dbReference type="NCBI Taxonomy" id="559292"/>
    <lineage>
        <taxon>Eukaryota</taxon>
        <taxon>Fungi</taxon>
        <taxon>Dikarya</taxon>
        <taxon>Ascomycota</taxon>
        <taxon>Saccharomycotina</taxon>
        <taxon>Saccharomycetes</taxon>
        <taxon>Saccharomycetales</taxon>
        <taxon>Saccharomycetaceae</taxon>
        <taxon>Saccharomyces</taxon>
    </lineage>
</organism>
<keyword id="KW-0002">3D-structure</keyword>
<keyword id="KW-0963">Cytoplasm</keyword>
<keyword id="KW-0539">Nucleus</keyword>
<keyword id="KW-0597">Phosphoprotein</keyword>
<keyword id="KW-0653">Protein transport</keyword>
<keyword id="KW-1185">Reference proteome</keyword>
<keyword id="KW-0813">Transport</keyword>
<keyword id="KW-0819">tRNA processing</keyword>
<dbReference type="EMBL" id="D87841">
    <property type="protein sequence ID" value="BAA20120.1"/>
    <property type="molecule type" value="Genomic_DNA"/>
</dbReference>
<dbReference type="EMBL" id="U19104">
    <property type="protein sequence ID" value="AAB67278.1"/>
    <property type="molecule type" value="Genomic_DNA"/>
</dbReference>
<dbReference type="EMBL" id="BK006945">
    <property type="protein sequence ID" value="DAA09685.1"/>
    <property type="molecule type" value="Genomic_DNA"/>
</dbReference>
<dbReference type="PIR" id="S51471">
    <property type="entry name" value="S51471"/>
</dbReference>
<dbReference type="RefSeq" id="NP_013488.3">
    <property type="nucleotide sequence ID" value="NM_001182273.3"/>
</dbReference>
<dbReference type="PDB" id="5CQS">
    <property type="method" value="X-ray"/>
    <property type="resolution" value="2.70 A"/>
    <property type="chains" value="A/B/C/D=919-1349"/>
</dbReference>
<dbReference type="PDB" id="6QK7">
    <property type="method" value="EM"/>
    <property type="resolution" value="3.30 A"/>
    <property type="chains" value="A/D=1-1349"/>
</dbReference>
<dbReference type="PDB" id="8ASV">
    <property type="method" value="EM"/>
    <property type="resolution" value="4.35 A"/>
    <property type="chains" value="A/D=1-1349"/>
</dbReference>
<dbReference type="PDB" id="8ASW">
    <property type="method" value="EM"/>
    <property type="resolution" value="3.96 A"/>
    <property type="chains" value="A/D=1-1349"/>
</dbReference>
<dbReference type="PDBsum" id="5CQS"/>
<dbReference type="PDBsum" id="6QK7"/>
<dbReference type="PDBsum" id="8ASV"/>
<dbReference type="PDBsum" id="8ASW"/>
<dbReference type="EMDB" id="EMD-15622"/>
<dbReference type="EMDB" id="EMD-15623"/>
<dbReference type="EMDB" id="EMD-4571"/>
<dbReference type="SMR" id="Q06706"/>
<dbReference type="BioGRID" id="31643">
    <property type="interactions" value="589"/>
</dbReference>
<dbReference type="ComplexPortal" id="CPX-779">
    <property type="entry name" value="Elongator holoenzyme complex"/>
</dbReference>
<dbReference type="DIP" id="DIP-2384N"/>
<dbReference type="FunCoup" id="Q06706">
    <property type="interactions" value="1279"/>
</dbReference>
<dbReference type="IntAct" id="Q06706">
    <property type="interactions" value="82"/>
</dbReference>
<dbReference type="MINT" id="Q06706"/>
<dbReference type="STRING" id="4932.YLR384C"/>
<dbReference type="iPTMnet" id="Q06706"/>
<dbReference type="PaxDb" id="4932-YLR384C"/>
<dbReference type="PeptideAtlas" id="Q06706"/>
<dbReference type="DNASU" id="851100"/>
<dbReference type="EnsemblFungi" id="YLR384C_mRNA">
    <property type="protein sequence ID" value="YLR384C"/>
    <property type="gene ID" value="YLR384C"/>
</dbReference>
<dbReference type="GeneID" id="851100"/>
<dbReference type="KEGG" id="sce:YLR384C"/>
<dbReference type="AGR" id="SGD:S000004376"/>
<dbReference type="SGD" id="S000004376">
    <property type="gene designation" value="IKI3"/>
</dbReference>
<dbReference type="VEuPathDB" id="FungiDB:YLR384C"/>
<dbReference type="eggNOG" id="KOG1920">
    <property type="taxonomic scope" value="Eukaryota"/>
</dbReference>
<dbReference type="GeneTree" id="ENSGT00390000013344"/>
<dbReference type="HOGENOM" id="CLU_001477_0_1_1"/>
<dbReference type="InParanoid" id="Q06706"/>
<dbReference type="OMA" id="WRESLYC"/>
<dbReference type="OrthoDB" id="40048at2759"/>
<dbReference type="BioCyc" id="MetaCyc:G3O-32450-MONOMER"/>
<dbReference type="BioCyc" id="YEAST:G3O-32450-MONOMER"/>
<dbReference type="UniPathway" id="UPA00988"/>
<dbReference type="BioGRID-ORCS" id="851100">
    <property type="hits" value="0 hits in 10 CRISPR screens"/>
</dbReference>
<dbReference type="EvolutionaryTrace" id="Q06706"/>
<dbReference type="PRO" id="PR:Q06706"/>
<dbReference type="Proteomes" id="UP000002311">
    <property type="component" value="Chromosome XII"/>
</dbReference>
<dbReference type="RNAct" id="Q06706">
    <property type="molecule type" value="protein"/>
</dbReference>
<dbReference type="GO" id="GO:0005737">
    <property type="term" value="C:cytoplasm"/>
    <property type="evidence" value="ECO:0000314"/>
    <property type="project" value="SGD"/>
</dbReference>
<dbReference type="GO" id="GO:0005829">
    <property type="term" value="C:cytosol"/>
    <property type="evidence" value="ECO:0000318"/>
    <property type="project" value="GO_Central"/>
</dbReference>
<dbReference type="GO" id="GO:0033588">
    <property type="term" value="C:elongator holoenzyme complex"/>
    <property type="evidence" value="ECO:0000314"/>
    <property type="project" value="UniProtKB"/>
</dbReference>
<dbReference type="GO" id="GO:0005654">
    <property type="term" value="C:nucleoplasm"/>
    <property type="evidence" value="ECO:0000304"/>
    <property type="project" value="Reactome"/>
</dbReference>
<dbReference type="GO" id="GO:0005634">
    <property type="term" value="C:nucleus"/>
    <property type="evidence" value="ECO:0000314"/>
    <property type="project" value="SGD"/>
</dbReference>
<dbReference type="GO" id="GO:0042802">
    <property type="term" value="F:identical protein binding"/>
    <property type="evidence" value="ECO:0000353"/>
    <property type="project" value="IntAct"/>
</dbReference>
<dbReference type="GO" id="GO:0000049">
    <property type="term" value="F:tRNA binding"/>
    <property type="evidence" value="ECO:0000314"/>
    <property type="project" value="SGD"/>
</dbReference>
<dbReference type="GO" id="GO:0015031">
    <property type="term" value="P:protein transport"/>
    <property type="evidence" value="ECO:0007669"/>
    <property type="project" value="UniProtKB-KW"/>
</dbReference>
<dbReference type="GO" id="GO:0006357">
    <property type="term" value="P:regulation of transcription by RNA polymerase II"/>
    <property type="evidence" value="ECO:0000315"/>
    <property type="project" value="SGD"/>
</dbReference>
<dbReference type="GO" id="GO:0006417">
    <property type="term" value="P:regulation of translation"/>
    <property type="evidence" value="ECO:0000303"/>
    <property type="project" value="ComplexPortal"/>
</dbReference>
<dbReference type="GO" id="GO:0002926">
    <property type="term" value="P:tRNA wobble base 5-methoxycarbonylmethyl-2-thiouridinylation"/>
    <property type="evidence" value="ECO:0000318"/>
    <property type="project" value="GO_Central"/>
</dbReference>
<dbReference type="GO" id="GO:0002098">
    <property type="term" value="P:tRNA wobble uridine modification"/>
    <property type="evidence" value="ECO:0000315"/>
    <property type="project" value="SGD"/>
</dbReference>
<dbReference type="IDEAL" id="IID50289"/>
<dbReference type="InterPro" id="IPR056167">
    <property type="entry name" value="A-sol_ELP1"/>
</dbReference>
<dbReference type="InterPro" id="IPR006849">
    <property type="entry name" value="Elp1"/>
</dbReference>
<dbReference type="InterPro" id="IPR056165">
    <property type="entry name" value="ELP1_b-prop_2"/>
</dbReference>
<dbReference type="InterPro" id="IPR056164">
    <property type="entry name" value="ELP1_N_b-prop_1"/>
</dbReference>
<dbReference type="InterPro" id="IPR056169">
    <property type="entry name" value="HB_ELP1"/>
</dbReference>
<dbReference type="InterPro" id="IPR056166">
    <property type="entry name" value="TPR_ELP1"/>
</dbReference>
<dbReference type="PANTHER" id="PTHR12747">
    <property type="entry name" value="ELONGATOR COMPLEX PROTEIN 1"/>
    <property type="match status" value="1"/>
</dbReference>
<dbReference type="PANTHER" id="PTHR12747:SF0">
    <property type="entry name" value="ELONGATOR COMPLEX PROTEIN 1"/>
    <property type="match status" value="1"/>
</dbReference>
<dbReference type="Pfam" id="PF23925">
    <property type="entry name" value="A-sol_ELP1"/>
    <property type="match status" value="1"/>
</dbReference>
<dbReference type="Pfam" id="PF04762">
    <property type="entry name" value="Beta-prop_ELP1_1st"/>
    <property type="match status" value="1"/>
</dbReference>
<dbReference type="Pfam" id="PF23797">
    <property type="entry name" value="Beta-prop_ELP1_2nd"/>
    <property type="match status" value="1"/>
</dbReference>
<dbReference type="Pfam" id="PF23936">
    <property type="entry name" value="HB_ELP1"/>
    <property type="match status" value="1"/>
</dbReference>
<dbReference type="Pfam" id="PF23878">
    <property type="entry name" value="TPR_ELP1"/>
    <property type="match status" value="1"/>
</dbReference>
<dbReference type="PIRSF" id="PIRSF017233">
    <property type="entry name" value="IKAP"/>
    <property type="match status" value="1"/>
</dbReference>
<dbReference type="SUPFAM" id="SSF101898">
    <property type="entry name" value="NHL repeat"/>
    <property type="match status" value="1"/>
</dbReference>
<dbReference type="SUPFAM" id="SSF69322">
    <property type="entry name" value="Tricorn protease domain 2"/>
    <property type="match status" value="1"/>
</dbReference>
<comment type="function">
    <text evidence="6 7 9 10 11 13 20">Component of the elongator complex which is required for multiple tRNA modifications, including mcm5U (5-methoxycarbonylmethyl uridine), mcm5s2U (5-methoxycarbonylmethyl-2-thiouridine), and ncm5U (5-carbamoylmethyl uridine) (PubMed:15769872, PubMed:18755837, PubMed:25569479, PubMed:31309145). The elongator complex catalyzes formation of carboxymethyluridine in the wobble base at position 34 in tRNAs (PubMed:29332244). Functions as a gamma-toxin target (TOT); disruption of the complex confers resistance to Kluyveromyces lactis toxin zymocin (pGKL1 killer toxin) (PubMed:12424236). May also be involved in sensitivity to Pichia inositovora toxin (PubMed:13680368). ELP1/IKI3 binds to tRNA, mediating interaction of the elongator complex with tRNA (PubMed:24750273). Independently, may be involved in polarized exocytosis (PubMed:15780940).</text>
</comment>
<comment type="pathway">
    <text evidence="9 11">tRNA modification; 5-methoxycarbonylmethyl-2-thiouridine-tRNA biosynthesis.</text>
</comment>
<comment type="subunit">
    <text evidence="3 4 5 12 14 15 16 17 18 19">Homodimer; dimerization promotes ELP1/IKI3 stability and elongator complex formation (PubMed:26261306). Component of the elongator complex which consists of ELP1/IKI3, ELP2, ELP3, ELP4, ELP5/IKI1 and ELP6 (PubMed:11435442, PubMed:11689709, PubMed:26261306, PubMed:27872205, PubMed:27974378). The elongator complex is composed of two copies of the Elp123 subcomplex (composed of ELP1/IKI3, ELP2 and ELP3) and two copies of the Elp456 subcomplex (composed of ELP4, ELP5/IKI1 and ELP6) (PubMed:25960406, PubMed:27872205, PubMed:27974378). The Elp123 subcomplex forms a two-lobed scaffold, which binds the Elp456 subcomplex asymmetrically (PubMed:27872205, PubMed:27974378). In the complex, ELP1/IKI3 interacts with ELP2 (PubMed:12139626). In each lobe, ELP2 is tightly sandwiched between ELP1/IKI3 and ELP3 (PubMed:31309145). The Elp123 subcomplex binds tRNA through ELP1/IKI3 and ELP3 and can bind 2 tRNAs simultaneously (PubMed:31309145). tRNA-binding induces conformational rearrangements which precisely position the targeted anticodon base in the active site (PubMed:31309145). The Elp456 subcomplex binds tRNA and has ATPase activity (PubMed:22343726). ELP1/IKI3 interacts with HRR25 and KTI12 (PubMed:25569479). Interacts with KTI11/DPH3 (PubMed:27694803).</text>
</comment>
<comment type="interaction">
    <interactant intactId="EBI-9068">
        <id>Q06706</id>
    </interactant>
    <interactant intactId="EBI-23459">
        <id>P42935</id>
        <label>ELP2</label>
    </interactant>
    <organismsDiffer>false</organismsDiffer>
    <experiments>12</experiments>
</comment>
<comment type="interaction">
    <interactant intactId="EBI-9068">
        <id>Q06706</id>
    </interactant>
    <interactant intactId="EBI-35277">
        <id>Q02884</id>
        <label>ELP4</label>
    </interactant>
    <organismsDiffer>false</organismsDiffer>
    <experiments>13</experiments>
</comment>
<comment type="interaction">
    <interactant intactId="EBI-9068">
        <id>Q06706</id>
    </interactant>
    <interactant intactId="EBI-27653">
        <id>Q04868</id>
        <label>ELP6</label>
    </interactant>
    <organismsDiffer>false</organismsDiffer>
    <experiments>8</experiments>
</comment>
<comment type="interaction">
    <interactant intactId="EBI-9068">
        <id>Q06706</id>
    </interactant>
    <interactant intactId="EBI-9061">
        <id>P38874</id>
        <label>IKI1</label>
    </interactant>
    <organismsDiffer>false</organismsDiffer>
    <experiments>11</experiments>
</comment>
<comment type="interaction">
    <interactant intactId="EBI-9068">
        <id>Q06706</id>
    </interactant>
    <interactant intactId="EBI-9068">
        <id>Q06706</id>
        <label>IKI3</label>
    </interactant>
    <organismsDiffer>false</organismsDiffer>
    <experiments>3</experiments>
</comment>
<comment type="subcellular location">
    <subcellularLocation>
        <location evidence="10 13">Cytoplasm</location>
    </subcellularLocation>
    <subcellularLocation>
        <location evidence="2 13">Nucleus</location>
    </subcellularLocation>
    <text evidence="13">Predominantly cytoplasmic.</text>
</comment>
<comment type="PTM">
    <text evidence="14">Phosphorylation promotes the tRNA modification function of the elongator complex.</text>
</comment>
<comment type="disruption phenotype">
    <text evidence="14">Loss of mcm5U (5-methoxycarbonylmethyl uridine) and ncm5U (5-carbamoylmethyl uridine) from tRNA.</text>
</comment>
<comment type="miscellaneous">
    <text evidence="8">Present with 10500 molecules/cell in log phase SD medium.</text>
</comment>
<comment type="similarity">
    <text evidence="21">Belongs to the ELP1/IKA1 family.</text>
</comment>
<comment type="caution">
    <text evidence="22 23 24 25">The elongator complex was originally thought to play a role in transcription elongation. However, it is no longer thought to play a direct role in this process and its primary function is thought to be in tRNA modification.</text>
</comment>
<accession>Q06706</accession>
<accession>D6VZ19</accession>
<accession>O00036</accession>
<feature type="chain" id="PRO_0000084179" description="Elongator complex protein 1">
    <location>
        <begin position="1"/>
        <end position="1349"/>
    </location>
</feature>
<feature type="region of interest" description="Mediates dimerization" evidence="15">
    <location>
        <begin position="919"/>
        <end position="1349"/>
    </location>
</feature>
<feature type="region of interest" description="Disordered" evidence="1">
    <location>
        <begin position="1214"/>
        <end position="1245"/>
    </location>
</feature>
<feature type="region of interest" description="Required for binding to tRNA" evidence="13">
    <location>
        <begin position="1228"/>
        <end position="1246"/>
    </location>
</feature>
<feature type="compositionally biased region" description="Low complexity" evidence="1">
    <location>
        <begin position="1214"/>
        <end position="1228"/>
    </location>
</feature>
<feature type="modified residue" description="Phosphoserine" evidence="14">
    <location>
        <position position="529"/>
    </location>
</feature>
<feature type="modified residue" description="Phosphoserine" evidence="14">
    <location>
        <position position="539"/>
    </location>
</feature>
<feature type="modified residue" description="Phosphoserine" evidence="14">
    <location>
        <position position="551"/>
    </location>
</feature>
<feature type="modified residue" description="Phosphoserine" evidence="14">
    <location>
        <position position="636"/>
    </location>
</feature>
<feature type="modified residue" description="Phosphoserine" evidence="14">
    <location>
        <position position="828"/>
    </location>
</feature>
<feature type="modified residue" description="Phosphoserine; by HRR25" evidence="14">
    <location>
        <position position="1198"/>
    </location>
</feature>
<feature type="modified residue" description="Phosphoserine; by HRR25" evidence="14">
    <location>
        <position position="1202"/>
    </location>
</feature>
<feature type="modified residue" description="Phosphoserine" evidence="14">
    <location>
        <position position="1205"/>
    </location>
</feature>
<feature type="modified residue" description="Phosphoserine" evidence="14">
    <location>
        <position position="1209"/>
    </location>
</feature>
<feature type="mutagenesis site" description="Does not affect elongator complex activity." evidence="14">
    <original>S</original>
    <variation>A</variation>
    <location>
        <position position="529"/>
    </location>
</feature>
<feature type="mutagenesis site" description="Does not affect elongator complex activity." evidence="14">
    <original>S</original>
    <variation>A</variation>
    <location>
        <position position="539"/>
    </location>
</feature>
<feature type="mutagenesis site" description="Does not affect elongator complex activity." evidence="14">
    <original>S</original>
    <variation>A</variation>
    <location>
        <position position="551"/>
    </location>
</feature>
<feature type="mutagenesis site" description="Does not affect elongator complex activity." evidence="14">
    <original>S</original>
    <variation>A</variation>
    <location>
        <position position="636"/>
    </location>
</feature>
<feature type="mutagenesis site" description="Does not affect elongator complex activity." evidence="14">
    <original>S</original>
    <variation>A</variation>
    <location>
        <position position="828"/>
    </location>
</feature>
<feature type="mutagenesis site" description="Disrupts dimer formation and elongator complex formation but does not affect binding to tRNA; when associated with A-1282 and A-1286." evidence="15">
    <original>R</original>
    <variation>A</variation>
    <location>
        <position position="1063"/>
    </location>
</feature>
<feature type="mutagenesis site" description="Does not affect elongator complex activity. Loss of elongator complex activity, reduced levels of mcm5U and ncm5U on tRNA and reduced interaction with HRR25 but no effect on elongator complex assembly; when associated with A-1202." evidence="14">
    <original>S</original>
    <variation>A</variation>
    <location>
        <position position="1198"/>
    </location>
</feature>
<feature type="mutagenesis site" description="Slightly reduced levels of mcm5U and ncm5U on tRNA; when associated with E-1202." evidence="14">
    <original>S</original>
    <variation>E</variation>
    <location>
        <position position="1198"/>
    </location>
</feature>
<feature type="mutagenesis site" description="Does not affect elongator complex activity. Loss of elongator complex activity, reduced levels of mcm5U and ncm5U on tRNA and reduced interaction with HRR25 but no effect on elongator complex assembly; when associated with A-1198." evidence="14">
    <original>S</original>
    <variation>A</variation>
    <location>
        <position position="1202"/>
    </location>
</feature>
<feature type="mutagenesis site" description="Slightly reduced levels of mcm5U and ncm5U on tRNA; when associated with E-1198." evidence="14">
    <original>S</original>
    <variation>E</variation>
    <location>
        <position position="1202"/>
    </location>
</feature>
<feature type="mutagenesis site" description="Does not affect elongator complex activity." evidence="14">
    <original>S</original>
    <variation>A</variation>
    <location>
        <position position="1205"/>
    </location>
</feature>
<feature type="mutagenesis site" description="Loss of phosphorylation at this site. Loss of elongator complex activity. Almost complete loss of mcm5U and ncm5U on tRNA. Does not affect elongator complex assembly. Enhances interaction with HRR25 and KTI12." evidence="14">
    <original>S</original>
    <variation>A</variation>
    <location>
        <position position="1209"/>
    </location>
</feature>
<feature type="mutagenesis site" description="Phosphomimetic mutant. Does not affect elongator complex activity." evidence="14">
    <original>S</original>
    <variation>D</variation>
    <location>
        <position position="1209"/>
    </location>
</feature>
<feature type="mutagenesis site" description="Loss of elongator complex activity. Abolishes binding to tRNA. Does not disrupt elongator complex assembly but decreases association of ELP1 with ELP5 and KTI12. Does not affect ELP1 self-association or association with ELP3. Does not affect the predominantly cytoplasmic localization." evidence="13">
    <original>RRTAKNKRREERKRARGK</original>
    <variation>AATAANAAREERAAAAGA</variation>
    <location>
        <begin position="1228"/>
        <end position="1245"/>
    </location>
</feature>
<feature type="mutagenesis site" description="Some loss of elongator complex activity." evidence="13">
    <original>RRTAKNKR</original>
    <variation>AATAANAA</variation>
    <location>
        <begin position="1228"/>
        <end position="1235"/>
    </location>
</feature>
<feature type="mutagenesis site" description="Does not affect elongator complex activity." evidence="13">
    <original>KRARGK</original>
    <variation>AAAAGA</variation>
    <location>
        <begin position="1240"/>
        <end position="1245"/>
    </location>
</feature>
<feature type="mutagenesis site" description="Disrupts dimer formation and elongator complex formation but does not affect binding to tRNA; when associated with A-1063 and A-1286." evidence="15">
    <original>R</original>
    <variation>A</variation>
    <location>
        <position position="1282"/>
    </location>
</feature>
<feature type="mutagenesis site" description="Disrupts dimer formation and elongator complex formation but does not affect binding to tRNA; when associated with A-1063 and A-1282." evidence="15">
    <original>R</original>
    <variation>A</variation>
    <location>
        <position position="1286"/>
    </location>
</feature>
<feature type="strand" evidence="29">
    <location>
        <begin position="20"/>
        <end position="29"/>
    </location>
</feature>
<feature type="strand" evidence="29">
    <location>
        <begin position="46"/>
        <end position="53"/>
    </location>
</feature>
<feature type="turn" evidence="29">
    <location>
        <begin position="54"/>
        <end position="57"/>
    </location>
</feature>
<feature type="strand" evidence="29">
    <location>
        <begin position="58"/>
        <end position="64"/>
    </location>
</feature>
<feature type="strand" evidence="29">
    <location>
        <begin position="66"/>
        <end position="68"/>
    </location>
</feature>
<feature type="strand" evidence="29">
    <location>
        <begin position="70"/>
        <end position="77"/>
    </location>
</feature>
<feature type="strand" evidence="29">
    <location>
        <begin position="83"/>
        <end position="86"/>
    </location>
</feature>
<feature type="strand" evidence="29">
    <location>
        <begin position="97"/>
        <end position="99"/>
    </location>
</feature>
<feature type="strand" evidence="29">
    <location>
        <begin position="104"/>
        <end position="106"/>
    </location>
</feature>
<feature type="strand" evidence="29">
    <location>
        <begin position="108"/>
        <end position="110"/>
    </location>
</feature>
<feature type="strand" evidence="29">
    <location>
        <begin position="120"/>
        <end position="122"/>
    </location>
</feature>
<feature type="strand" evidence="29">
    <location>
        <begin position="145"/>
        <end position="147"/>
    </location>
</feature>
<feature type="turn" evidence="29">
    <location>
        <begin position="162"/>
        <end position="164"/>
    </location>
</feature>
<feature type="strand" evidence="29">
    <location>
        <begin position="165"/>
        <end position="168"/>
    </location>
</feature>
<feature type="strand" evidence="29">
    <location>
        <begin position="177"/>
        <end position="179"/>
    </location>
</feature>
<feature type="strand" evidence="29">
    <location>
        <begin position="253"/>
        <end position="255"/>
    </location>
</feature>
<feature type="strand" evidence="29">
    <location>
        <begin position="257"/>
        <end position="269"/>
    </location>
</feature>
<feature type="strand" evidence="29">
    <location>
        <begin position="281"/>
        <end position="292"/>
    </location>
</feature>
<feature type="strand" evidence="29">
    <location>
        <begin position="294"/>
        <end position="297"/>
    </location>
</feature>
<feature type="turn" evidence="29">
    <location>
        <begin position="312"/>
        <end position="314"/>
    </location>
</feature>
<feature type="strand" evidence="29">
    <location>
        <begin position="326"/>
        <end position="328"/>
    </location>
</feature>
<feature type="strand" evidence="29">
    <location>
        <begin position="332"/>
        <end position="337"/>
    </location>
</feature>
<feature type="strand" evidence="29">
    <location>
        <begin position="343"/>
        <end position="349"/>
    </location>
</feature>
<feature type="strand" evidence="29">
    <location>
        <begin position="359"/>
        <end position="362"/>
    </location>
</feature>
<feature type="strand" evidence="29">
    <location>
        <begin position="364"/>
        <end position="367"/>
    </location>
</feature>
<feature type="strand" evidence="29">
    <location>
        <begin position="369"/>
        <end position="372"/>
    </location>
</feature>
<feature type="strand" evidence="29">
    <location>
        <begin position="374"/>
        <end position="385"/>
    </location>
</feature>
<feature type="strand" evidence="29">
    <location>
        <begin position="387"/>
        <end position="394"/>
    </location>
</feature>
<feature type="strand" evidence="29">
    <location>
        <begin position="398"/>
        <end position="403"/>
    </location>
</feature>
<feature type="strand" evidence="29">
    <location>
        <begin position="405"/>
        <end position="415"/>
    </location>
</feature>
<feature type="strand" evidence="29">
    <location>
        <begin position="418"/>
        <end position="427"/>
    </location>
</feature>
<feature type="strand" evidence="29">
    <location>
        <begin position="434"/>
        <end position="437"/>
    </location>
</feature>
<feature type="strand" evidence="29">
    <location>
        <begin position="441"/>
        <end position="446"/>
    </location>
</feature>
<feature type="strand" evidence="29">
    <location>
        <begin position="449"/>
        <end position="454"/>
    </location>
</feature>
<feature type="turn" evidence="29">
    <location>
        <begin position="455"/>
        <end position="457"/>
    </location>
</feature>
<feature type="strand" evidence="29">
    <location>
        <begin position="462"/>
        <end position="464"/>
    </location>
</feature>
<feature type="strand" evidence="29">
    <location>
        <begin position="478"/>
        <end position="480"/>
    </location>
</feature>
<feature type="strand" evidence="29">
    <location>
        <begin position="482"/>
        <end position="484"/>
    </location>
</feature>
<feature type="strand" evidence="29">
    <location>
        <begin position="486"/>
        <end position="490"/>
    </location>
</feature>
<feature type="strand" evidence="29">
    <location>
        <begin position="492"/>
        <end position="499"/>
    </location>
</feature>
<feature type="helix" evidence="29">
    <location>
        <begin position="503"/>
        <end position="507"/>
    </location>
</feature>
<feature type="strand" evidence="29">
    <location>
        <begin position="513"/>
        <end position="519"/>
    </location>
</feature>
<feature type="strand" evidence="29">
    <location>
        <begin position="522"/>
        <end position="524"/>
    </location>
</feature>
<feature type="strand" evidence="29">
    <location>
        <begin position="529"/>
        <end position="536"/>
    </location>
</feature>
<feature type="turn" evidence="29">
    <location>
        <begin position="537"/>
        <end position="539"/>
    </location>
</feature>
<feature type="strand" evidence="29">
    <location>
        <begin position="540"/>
        <end position="546"/>
    </location>
</feature>
<feature type="strand" evidence="29">
    <location>
        <begin position="551"/>
        <end position="557"/>
    </location>
</feature>
<feature type="strand" evidence="29">
    <location>
        <begin position="559"/>
        <end position="563"/>
    </location>
</feature>
<feature type="strand" evidence="29">
    <location>
        <begin position="565"/>
        <end position="567"/>
    </location>
</feature>
<feature type="strand" evidence="29">
    <location>
        <begin position="571"/>
        <end position="574"/>
    </location>
</feature>
<feature type="strand" evidence="29">
    <location>
        <begin position="576"/>
        <end position="581"/>
    </location>
</feature>
<feature type="strand" evidence="29">
    <location>
        <begin position="585"/>
        <end position="592"/>
    </location>
</feature>
<feature type="strand" evidence="29">
    <location>
        <begin position="596"/>
        <end position="600"/>
    </location>
</feature>
<feature type="strand" evidence="29">
    <location>
        <begin position="606"/>
        <end position="611"/>
    </location>
</feature>
<feature type="strand" evidence="29">
    <location>
        <begin position="616"/>
        <end position="625"/>
    </location>
</feature>
<feature type="strand" evidence="29">
    <location>
        <begin position="629"/>
        <end position="632"/>
    </location>
</feature>
<feature type="strand" evidence="29">
    <location>
        <begin position="640"/>
        <end position="651"/>
    </location>
</feature>
<feature type="strand" evidence="29">
    <location>
        <begin position="653"/>
        <end position="657"/>
    </location>
</feature>
<feature type="strand" evidence="29">
    <location>
        <begin position="661"/>
        <end position="663"/>
    </location>
</feature>
<feature type="strand" evidence="29">
    <location>
        <begin position="666"/>
        <end position="670"/>
    </location>
</feature>
<feature type="strand" evidence="29">
    <location>
        <begin position="673"/>
        <end position="677"/>
    </location>
</feature>
<feature type="strand" evidence="29">
    <location>
        <begin position="679"/>
        <end position="687"/>
    </location>
</feature>
<feature type="strand" evidence="29">
    <location>
        <begin position="705"/>
        <end position="710"/>
    </location>
</feature>
<feature type="strand" evidence="29">
    <location>
        <begin position="716"/>
        <end position="721"/>
    </location>
</feature>
<feature type="turn" evidence="29">
    <location>
        <begin position="722"/>
        <end position="725"/>
    </location>
</feature>
<feature type="strand" evidence="29">
    <location>
        <begin position="726"/>
        <end position="730"/>
    </location>
</feature>
<feature type="strand" evidence="29">
    <location>
        <begin position="732"/>
        <end position="734"/>
    </location>
</feature>
<feature type="strand" evidence="29">
    <location>
        <begin position="736"/>
        <end position="739"/>
    </location>
</feature>
<feature type="helix" evidence="29">
    <location>
        <begin position="742"/>
        <end position="754"/>
    </location>
</feature>
<feature type="helix" evidence="29">
    <location>
        <begin position="760"/>
        <end position="767"/>
    </location>
</feature>
<feature type="helix" evidence="29">
    <location>
        <begin position="774"/>
        <end position="777"/>
    </location>
</feature>
<feature type="helix" evidence="29">
    <location>
        <begin position="780"/>
        <end position="785"/>
    </location>
</feature>
<feature type="helix" evidence="29">
    <location>
        <begin position="787"/>
        <end position="793"/>
    </location>
</feature>
<feature type="helix" evidence="29">
    <location>
        <begin position="797"/>
        <end position="805"/>
    </location>
</feature>
<feature type="turn" evidence="29">
    <location>
        <begin position="813"/>
        <end position="816"/>
    </location>
</feature>
<feature type="strand" evidence="29">
    <location>
        <begin position="821"/>
        <end position="823"/>
    </location>
</feature>
<feature type="helix" evidence="29">
    <location>
        <begin position="838"/>
        <end position="842"/>
    </location>
</feature>
<feature type="turn" evidence="29">
    <location>
        <begin position="843"/>
        <end position="846"/>
    </location>
</feature>
<feature type="helix" evidence="29">
    <location>
        <begin position="854"/>
        <end position="865"/>
    </location>
</feature>
<feature type="turn" evidence="29">
    <location>
        <begin position="866"/>
        <end position="868"/>
    </location>
</feature>
<feature type="helix" evidence="29">
    <location>
        <begin position="872"/>
        <end position="875"/>
    </location>
</feature>
<feature type="helix" evidence="29">
    <location>
        <begin position="877"/>
        <end position="884"/>
    </location>
</feature>
<feature type="strand" evidence="29">
    <location>
        <begin position="887"/>
        <end position="889"/>
    </location>
</feature>
<feature type="helix" evidence="29">
    <location>
        <begin position="892"/>
        <end position="898"/>
    </location>
</feature>
<feature type="strand" evidence="29">
    <location>
        <begin position="904"/>
        <end position="906"/>
    </location>
</feature>
<feature type="helix" evidence="29">
    <location>
        <begin position="907"/>
        <end position="915"/>
    </location>
</feature>
<feature type="helix" evidence="28">
    <location>
        <begin position="923"/>
        <end position="930"/>
    </location>
</feature>
<feature type="helix" evidence="28">
    <location>
        <begin position="934"/>
        <end position="943"/>
    </location>
</feature>
<feature type="helix" evidence="28">
    <location>
        <begin position="948"/>
        <end position="950"/>
    </location>
</feature>
<feature type="helix" evidence="28">
    <location>
        <begin position="952"/>
        <end position="959"/>
    </location>
</feature>
<feature type="helix" evidence="28">
    <location>
        <begin position="963"/>
        <end position="974"/>
    </location>
</feature>
<feature type="helix" evidence="28">
    <location>
        <begin position="977"/>
        <end position="984"/>
    </location>
</feature>
<feature type="strand" evidence="29">
    <location>
        <begin position="990"/>
        <end position="992"/>
    </location>
</feature>
<feature type="helix" evidence="28">
    <location>
        <begin position="995"/>
        <end position="1004"/>
    </location>
</feature>
<feature type="helix" evidence="28">
    <location>
        <begin position="1007"/>
        <end position="1013"/>
    </location>
</feature>
<feature type="helix" evidence="28">
    <location>
        <begin position="1014"/>
        <end position="1016"/>
    </location>
</feature>
<feature type="helix" evidence="28">
    <location>
        <begin position="1018"/>
        <end position="1032"/>
    </location>
</feature>
<feature type="turn" evidence="28">
    <location>
        <begin position="1033"/>
        <end position="1036"/>
    </location>
</feature>
<feature type="helix" evidence="28">
    <location>
        <begin position="1038"/>
        <end position="1047"/>
    </location>
</feature>
<feature type="helix" evidence="28">
    <location>
        <begin position="1051"/>
        <end position="1060"/>
    </location>
</feature>
<feature type="helix" evidence="28">
    <location>
        <begin position="1064"/>
        <end position="1073"/>
    </location>
</feature>
<feature type="turn" evidence="28">
    <location>
        <begin position="1076"/>
        <end position="1078"/>
    </location>
</feature>
<feature type="helix" evidence="28">
    <location>
        <begin position="1079"/>
        <end position="1092"/>
    </location>
</feature>
<feature type="helix" evidence="28">
    <location>
        <begin position="1096"/>
        <end position="1107"/>
    </location>
</feature>
<feature type="helix" evidence="28">
    <location>
        <begin position="1110"/>
        <end position="1119"/>
    </location>
</feature>
<feature type="helix" evidence="28">
    <location>
        <begin position="1123"/>
        <end position="1132"/>
    </location>
</feature>
<feature type="helix" evidence="28">
    <location>
        <begin position="1138"/>
        <end position="1141"/>
    </location>
</feature>
<feature type="helix" evidence="28">
    <location>
        <begin position="1143"/>
        <end position="1170"/>
    </location>
</feature>
<feature type="helix" evidence="28">
    <location>
        <begin position="1253"/>
        <end position="1282"/>
    </location>
</feature>
<feature type="helix" evidence="28">
    <location>
        <begin position="1286"/>
        <end position="1308"/>
    </location>
</feature>
<feature type="helix" evidence="28">
    <location>
        <begin position="1345"/>
        <end position="1347"/>
    </location>
</feature>
<proteinExistence type="evidence at protein level"/>
<reference key="1">
    <citation type="journal article" date="1997" name="Biosci. Biotechnol. Biochem.">
        <title>Characterization of IKI1 and IKI3 genes conferring pGKL killer sensitivity on Saccharomyces cerevisiae.</title>
        <authorList>
            <person name="Yajima H."/>
            <person name="Tokunaga M."/>
            <person name="Nakayama-Murayama A."/>
            <person name="Hishinuma F."/>
        </authorList>
    </citation>
    <scope>NUCLEOTIDE SEQUENCE [GENOMIC DNA]</scope>
</reference>
<reference key="2">
    <citation type="journal article" date="1997" name="Nature">
        <title>The nucleotide sequence of Saccharomyces cerevisiae chromosome XII.</title>
        <authorList>
            <person name="Johnston M."/>
            <person name="Hillier L.W."/>
            <person name="Riles L."/>
            <person name="Albermann K."/>
            <person name="Andre B."/>
            <person name="Ansorge W."/>
            <person name="Benes V."/>
            <person name="Brueckner M."/>
            <person name="Delius H."/>
            <person name="Dubois E."/>
            <person name="Duesterhoeft A."/>
            <person name="Entian K.-D."/>
            <person name="Floeth M."/>
            <person name="Goffeau A."/>
            <person name="Hebling U."/>
            <person name="Heumann K."/>
            <person name="Heuss-Neitzel D."/>
            <person name="Hilbert H."/>
            <person name="Hilger F."/>
            <person name="Kleine K."/>
            <person name="Koetter P."/>
            <person name="Louis E.J."/>
            <person name="Messenguy F."/>
            <person name="Mewes H.-W."/>
            <person name="Miosga T."/>
            <person name="Moestl D."/>
            <person name="Mueller-Auer S."/>
            <person name="Nentwich U."/>
            <person name="Obermaier B."/>
            <person name="Piravandi E."/>
            <person name="Pohl T.M."/>
            <person name="Portetelle D."/>
            <person name="Purnelle B."/>
            <person name="Rechmann S."/>
            <person name="Rieger M."/>
            <person name="Rinke M."/>
            <person name="Rose M."/>
            <person name="Scharfe M."/>
            <person name="Scherens B."/>
            <person name="Scholler P."/>
            <person name="Schwager C."/>
            <person name="Schwarz S."/>
            <person name="Underwood A.P."/>
            <person name="Urrestarazu L.A."/>
            <person name="Vandenbol M."/>
            <person name="Verhasselt P."/>
            <person name="Vierendeels F."/>
            <person name="Voet M."/>
            <person name="Volckaert G."/>
            <person name="Voss H."/>
            <person name="Wambutt R."/>
            <person name="Wedler E."/>
            <person name="Wedler H."/>
            <person name="Zimmermann F.K."/>
            <person name="Zollner A."/>
            <person name="Hani J."/>
            <person name="Hoheisel J.D."/>
        </authorList>
    </citation>
    <scope>NUCLEOTIDE SEQUENCE [LARGE SCALE GENOMIC DNA]</scope>
    <source>
        <strain>ATCC 204508 / S288c</strain>
    </source>
</reference>
<reference key="3">
    <citation type="journal article" date="2014" name="G3 (Bethesda)">
        <title>The reference genome sequence of Saccharomyces cerevisiae: Then and now.</title>
        <authorList>
            <person name="Engel S.R."/>
            <person name="Dietrich F.S."/>
            <person name="Fisk D.G."/>
            <person name="Binkley G."/>
            <person name="Balakrishnan R."/>
            <person name="Costanzo M.C."/>
            <person name="Dwight S.S."/>
            <person name="Hitz B.C."/>
            <person name="Karra K."/>
            <person name="Nash R.S."/>
            <person name="Weng S."/>
            <person name="Wong E.D."/>
            <person name="Lloyd P."/>
            <person name="Skrzypek M.S."/>
            <person name="Miyasato S.R."/>
            <person name="Simison M."/>
            <person name="Cherry J.M."/>
        </authorList>
    </citation>
    <scope>GENOME REANNOTATION</scope>
    <source>
        <strain>ATCC 204508 / S288c</strain>
    </source>
</reference>
<reference key="4">
    <citation type="journal article" date="1999" name="Mol. Cell">
        <title>Elongator, a multisubunit component of a novel RNA polymerase II holoenzyme for transcriptional elongation.</title>
        <authorList>
            <person name="Otero G."/>
            <person name="Fellows J."/>
            <person name="Li Y."/>
            <person name="de Bizemont T."/>
            <person name="Dirac A.M."/>
            <person name="Gustafsson C.M."/>
            <person name="Erdjument-Bromage H."/>
            <person name="Tempst P."/>
            <person name="Svejstrup J.Q."/>
        </authorList>
    </citation>
    <scope>SUBCELLULAR LOCATION</scope>
</reference>
<reference key="5">
    <citation type="journal article" date="2001" name="EMBO J.">
        <title>Saccharomyces cerevisiae Elongator mutations confer resistance to the Kluyveromyces lactis zymocin.</title>
        <authorList>
            <person name="Frohloff F."/>
            <person name="Fichtner L."/>
            <person name="Jablonowski D."/>
            <person name="Breunig K.D."/>
            <person name="Schaffrath R."/>
        </authorList>
    </citation>
    <scope>FUNCTION OF THE ELONGATOR COMPLEX IN ZYMOCIN SENSITIVITY</scope>
</reference>
<reference key="6">
    <citation type="journal article" date="2001" name="J. Biol. Chem.">
        <title>RNA polymerase II elongator holoenzyme is composed of two discrete subcomplexes.</title>
        <authorList>
            <person name="Winkler G.S."/>
            <person name="Petrakis T.G."/>
            <person name="Ethelberg S."/>
            <person name="Tokunaga M."/>
            <person name="Erdjument-Bromage H."/>
            <person name="Tempst P."/>
            <person name="Svejstrup J.Q."/>
        </authorList>
    </citation>
    <scope>IDENTIFICATION IN THE ELONGATOR COMPLEX</scope>
</reference>
<reference key="7">
    <citation type="journal article" date="2001" name="Mol. Cell. Biol.">
        <title>Characterization of a six-subunit holo-elongator complex required for the regulated expression of a group of genes in Saccharomyces cerevisiae.</title>
        <authorList>
            <person name="Krogan N.J."/>
            <person name="Greenblatt J.F."/>
        </authorList>
    </citation>
    <scope>IDENTIFICATION IN THE ELONGATOR COMPLEX</scope>
</reference>
<reference key="8">
    <citation type="journal article" date="2002" name="Mol. Microbiol.">
        <title>Protein interactions within Saccharomyces cerevisiae Elongator, a complex essential for Kluyveromyces lactis zymocicity.</title>
        <authorList>
            <person name="Fichtner L."/>
            <person name="Frohloff F."/>
            <person name="Jablonowski D."/>
            <person name="Stark M.J.R."/>
            <person name="Schaffrath R."/>
        </authorList>
    </citation>
    <scope>INTERACTION WITH ELP2</scope>
</reference>
<reference key="9">
    <citation type="journal article" date="2002" name="Proc. Natl. Acad. Sci. U.S.A.">
        <title>Elongator is a histone H3 and H4 acetyltransferase important for normal histone acetylation levels in vivo.</title>
        <authorList>
            <person name="Winkler G.S."/>
            <person name="Kristjuhan A."/>
            <person name="Erdjument-Bromage H."/>
            <person name="Tempst P."/>
            <person name="Svejstrup J.Q."/>
        </authorList>
    </citation>
    <scope>DISPUTED FUNCTION IN HISTONE ACETYLATION</scope>
</reference>
<reference key="10">
    <citation type="journal article" date="2003" name="J. Biol. Chem.">
        <title>Subunit communications crucial for the functional integrity of the yeast RNA polymerase II elongator (gamma-toxin target (TOT)) complex.</title>
        <authorList>
            <person name="Frohloff F."/>
            <person name="Jablonowski D."/>
            <person name="Fichtner L."/>
            <person name="Schaffrath R."/>
        </authorList>
    </citation>
    <scope>FUNCTION</scope>
</reference>
<reference key="11">
    <citation type="journal article" date="2003" name="Mol. Genet. Genomics">
        <title>Structural and functional analysis of the killer element pPin1-3 from Pichia inositovora.</title>
        <authorList>
            <person name="Klassen R."/>
            <person name="Meinhardt F."/>
        </authorList>
    </citation>
    <scope>FUNCTION OF THE ELONGATOR COMPLEX IN PICHIA INOSITOVORA TOXIN SENSITIVITY</scope>
</reference>
<reference key="12">
    <citation type="journal article" date="2003" name="Nature">
        <title>Global analysis of protein localization in budding yeast.</title>
        <authorList>
            <person name="Huh W.-K."/>
            <person name="Falvo J.V."/>
            <person name="Gerke L.C."/>
            <person name="Carroll A.S."/>
            <person name="Howson R.W."/>
            <person name="Weissman J.S."/>
            <person name="O'Shea E.K."/>
        </authorList>
    </citation>
    <scope>SUBCELLULAR LOCATION [LARGE SCALE ANALYSIS]</scope>
</reference>
<reference key="13">
    <citation type="journal article" date="2003" name="Nature">
        <title>Global analysis of protein expression in yeast.</title>
        <authorList>
            <person name="Ghaemmaghami S."/>
            <person name="Huh W.-K."/>
            <person name="Bower K."/>
            <person name="Howson R.W."/>
            <person name="Belle A."/>
            <person name="Dephoure N."/>
            <person name="O'Shea E.K."/>
            <person name="Weissman J.S."/>
        </authorList>
    </citation>
    <scope>LEVEL OF PROTEIN EXPRESSION [LARGE SCALE ANALYSIS]</scope>
</reference>
<reference key="14">
    <citation type="journal article" date="2005" name="Mol. Cell">
        <title>Elp1p, the yeast homolog of the FD disease syndrome protein, negatively regulates exocytosis independently of transcriptional elongation.</title>
        <authorList>
            <person name="Rahl P.B."/>
            <person name="Chen C.Z."/>
            <person name="Collins R.N."/>
        </authorList>
    </citation>
    <scope>FUNCTION IN EXOCYTOSIS REGULATION</scope>
    <scope>SUBCELLULAR LOCATION</scope>
</reference>
<reference key="15">
    <citation type="journal article" date="2005" name="RNA">
        <title>An early step in wobble uridine tRNA modification requires the Elongator complex.</title>
        <authorList>
            <person name="Huang B."/>
            <person name="Johansson M.J.O."/>
            <person name="Bystroem A.S."/>
        </authorList>
    </citation>
    <scope>FUNCTION IN TRNA MODIFICATION</scope>
</reference>
<reference key="16">
    <citation type="journal article" date="2008" name="RNA">
        <title>A genome-wide screen identifies genes required for formation of the wobble nucleoside 5-methoxycarbonylmethyl-2-thiouridine in Saccharomyces cerevisiae.</title>
        <authorList>
            <person name="Huang B."/>
            <person name="Lu J."/>
            <person name="Bystroem A.S."/>
        </authorList>
    </citation>
    <scope>FUNCTION</scope>
</reference>
<reference key="17">
    <citation type="journal article" date="2012" name="Nat. Struct. Mol. Biol.">
        <title>The Elongator subcomplex Elp456 is a hexameric RecA-like ATPase.</title>
        <authorList>
            <person name="Glatt S."/>
            <person name="Letoquart J."/>
            <person name="Faux C."/>
            <person name="Taylor N.M."/>
            <person name="Seraphin B."/>
            <person name="Muller C.W."/>
        </authorList>
    </citation>
    <scope>SUBUNIT</scope>
</reference>
<reference key="18">
    <citation type="journal article" date="2014" name="Mol. Microbiol.">
        <title>A conserved and essential basic region mediates tRNA binding to the Elp1 subunit of the Saccharomyces cerevisiae Elongator complex.</title>
        <authorList>
            <person name="Di Santo R."/>
            <person name="Bandau S."/>
            <person name="Stark M.J."/>
        </authorList>
    </citation>
    <scope>FUNCTION</scope>
    <scope>SUBCELLULAR LOCATION</scope>
    <scope>MUTAGENESIS OF 1228-ARG--ARG-1235; 1228-ARG--LYS-1246 AND 1240-LYS--LYS-1245</scope>
</reference>
<reference key="19">
    <citation type="journal article" date="2015" name="PLoS Genet.">
        <title>Phosphorylation of Elp1 by Hrr25 is required for elongator-dependent tRNA modification in yeast.</title>
        <authorList>
            <person name="Abdel-Fattah W."/>
            <person name="Jablonowski D."/>
            <person name="Di Santo R."/>
            <person name="Thuering K.L."/>
            <person name="Scheidt V."/>
            <person name="Hammermeister A."/>
            <person name="Ten Have S."/>
            <person name="Helm M."/>
            <person name="Schaffrath R."/>
            <person name="Stark M.J."/>
        </authorList>
    </citation>
    <scope>FUNCTION</scope>
    <scope>INTERACTION WITH HRR25 AND KTI12</scope>
    <scope>DISRUPTION PHENOTYPE</scope>
    <scope>PHOSPHORYLATION AT SER-529; SER-539; SER-551; SER-636; SER-828; SER-1198; SER-1202; SER-1205 AND SER-1209</scope>
    <scope>MUTAGENESIS OF SER-529; SER-539; SER-551; SER-636; SER-828; SER-1198; SER-1202; SER-1205 AND SER-1209</scope>
    <scope>IDENTIFICATION BY MASS SPECTROMETRY</scope>
</reference>
<reference key="20">
    <citation type="journal article" date="2015" name="Structure">
        <title>The Elp2 subunit is essential for elongator complex assembly and functional regulation.</title>
        <authorList>
            <person name="Dong C."/>
            <person name="Lin Z."/>
            <person name="Diao W."/>
            <person name="Li D."/>
            <person name="Chu X."/>
            <person name="Wang Z."/>
            <person name="Zhou H."/>
            <person name="Xie Z."/>
            <person name="Shen Y."/>
            <person name="Long J."/>
        </authorList>
    </citation>
    <scope>IDENTIFICATION IN THE ELONGATOR ELP123 SUBCOMPLEX</scope>
</reference>
<reference key="21">
    <citation type="journal article" date="2016" name="Nat. Chem. Biol.">
        <title>Cbr1 is a Dph3 reductase required for the tRNA wobble uridine modification.</title>
        <authorList>
            <person name="Lin Z."/>
            <person name="Dong M."/>
            <person name="Zhang Y."/>
            <person name="Lee E.A."/>
            <person name="Lin H."/>
        </authorList>
    </citation>
    <scope>INTERACTION WITH KTI11</scope>
    <scope>IDENTIFICATION BY MASS SPECTROMETRY</scope>
</reference>
<reference key="22">
    <citation type="journal article" date="2018" name="Cell. Mol. Life Sci.">
        <title>Structural insights into the function of Elongator.</title>
        <authorList>
            <person name="Dalwadi U."/>
            <person name="Yip C.K."/>
        </authorList>
    </citation>
    <scope>REVIEW</scope>
</reference>
<reference evidence="26" key="23">
    <citation type="journal article" date="2015" name="Proc. Natl. Acad. Sci. U.S.A.">
        <title>Dimerization of elongator protein 1 is essential for Elongator complex assembly.</title>
        <authorList>
            <person name="Xu H."/>
            <person name="Lin Z."/>
            <person name="Li F."/>
            <person name="Diao W."/>
            <person name="Dong C."/>
            <person name="Zhou H."/>
            <person name="Xie X."/>
            <person name="Wang Z."/>
            <person name="Shen Y."/>
            <person name="Long J."/>
        </authorList>
    </citation>
    <scope>X-RAY CRYSTALLOGRAPHY (2.70 ANGSTROMS) OF 919-1349</scope>
    <scope>SUBUNIT</scope>
    <scope>IDENTIFICATION IN THE ELONGATOR COMPLEX</scope>
    <scope>DIMERIZATION REGION</scope>
    <scope>MUTAGENESIS OF ARG-1063; ARG-1282 AND ARG-1286</scope>
</reference>
<reference key="24">
    <citation type="journal article" date="2017" name="EMBO Rep.">
        <title>Architecture of the yeast Elongator complex.</title>
        <authorList>
            <person name="Dauden M.I."/>
            <person name="Kosinski J."/>
            <person name="Kolaj-Robin O."/>
            <person name="Desfosses A."/>
            <person name="Ori A."/>
            <person name="Faux C."/>
            <person name="Hoffmann N.A."/>
            <person name="Onuma O.F."/>
            <person name="Breunig K.D."/>
            <person name="Beck M."/>
            <person name="Sachse C."/>
            <person name="Seraphin B."/>
            <person name="Glatt S."/>
            <person name="Mueller C.W."/>
        </authorList>
    </citation>
    <scope>STRUCTURE BY ELECTRON MICROSCOPY (3.3 ANGSTROMS)</scope>
    <scope>IDENTIFICATION IN THE ELONGATOR COMPLEX</scope>
</reference>
<reference key="25">
    <citation type="journal article" date="2017" name="EMBO Rep.">
        <title>Molecular architecture of the yeast Elongator complex reveals an unexpected asymmetric subunit arrangement.</title>
        <authorList>
            <person name="Setiaputra D.T."/>
            <person name="Cheng D.T."/>
            <person name="Lu S."/>
            <person name="Hansen J.M."/>
            <person name="Dalwadi U."/>
            <person name="Lam C.H."/>
            <person name="To J.L."/>
            <person name="Dong M.Q."/>
            <person name="Yip C.K."/>
        </authorList>
    </citation>
    <scope>STRUCTURE BY ELECTRON MICROSCOPY</scope>
    <scope>IDENTIFICATION IN THE ELONGATOR COMPLEX</scope>
</reference>
<reference evidence="27" key="26">
    <citation type="journal article" date="2019" name="Sci. Adv.">
        <title>Molecular basis of tRNA recognition by the Elongator complex.</title>
        <authorList>
            <person name="Dauden M.I."/>
            <person name="Jaciuk M."/>
            <person name="Weis F."/>
            <person name="Lin T.Y."/>
            <person name="Kleindienst C."/>
            <person name="Abbassi N.E.H."/>
            <person name="Khatter H."/>
            <person name="Krutyholowa R."/>
            <person name="Breunig K.D."/>
            <person name="Kosinski J."/>
            <person name="Mueller C.W."/>
            <person name="Glatt S."/>
        </authorList>
    </citation>
    <scope>STRUCTURE BY ELECTRON MICROSCOPY (3.30 ANGSTROMS) OF THE ELONGATOR ELP123 SUBCOMPLEX</scope>
    <scope>FUNCTION</scope>
</reference>